<gene>
    <name type="ordered locus">RBAM_008100</name>
</gene>
<sequence length="71" mass="8162">MPSQQTETLNKMIEDISQKLNMLNVGVIRAEDFSDEKIEDLTYLHQMVMKKTSFSPSEMQAIAEELASLRK</sequence>
<evidence type="ECO:0000255" key="1">
    <source>
        <dbReference type="HAMAP-Rule" id="MF_00829"/>
    </source>
</evidence>
<protein>
    <recommendedName>
        <fullName evidence="1">UPF0435 protein RBAM_008100</fullName>
    </recommendedName>
</protein>
<comment type="similarity">
    <text evidence="1">Belongs to the UPF0435 family.</text>
</comment>
<organism>
    <name type="scientific">Bacillus velezensis (strain DSM 23117 / BGSC 10A6 / LMG 26770 / FZB42)</name>
    <name type="common">Bacillus amyloliquefaciens subsp. plantarum</name>
    <dbReference type="NCBI Taxonomy" id="326423"/>
    <lineage>
        <taxon>Bacteria</taxon>
        <taxon>Bacillati</taxon>
        <taxon>Bacillota</taxon>
        <taxon>Bacilli</taxon>
        <taxon>Bacillales</taxon>
        <taxon>Bacillaceae</taxon>
        <taxon>Bacillus</taxon>
        <taxon>Bacillus amyloliquefaciens group</taxon>
    </lineage>
</organism>
<feature type="chain" id="PRO_1000062718" description="UPF0435 protein RBAM_008100">
    <location>
        <begin position="1"/>
        <end position="71"/>
    </location>
</feature>
<dbReference type="EMBL" id="CP000560">
    <property type="protein sequence ID" value="ABS73194.1"/>
    <property type="molecule type" value="Genomic_DNA"/>
</dbReference>
<dbReference type="SMR" id="A7Z2G8"/>
<dbReference type="KEGG" id="bay:RBAM_008100"/>
<dbReference type="HOGENOM" id="CLU_199533_1_0_9"/>
<dbReference type="Proteomes" id="UP000001120">
    <property type="component" value="Chromosome"/>
</dbReference>
<dbReference type="HAMAP" id="MF_00829">
    <property type="entry name" value="UPF0435"/>
    <property type="match status" value="1"/>
</dbReference>
<dbReference type="InterPro" id="IPR009507">
    <property type="entry name" value="UPF0435"/>
</dbReference>
<dbReference type="Pfam" id="PF06569">
    <property type="entry name" value="DUF1128"/>
    <property type="match status" value="1"/>
</dbReference>
<proteinExistence type="inferred from homology"/>
<name>Y810_BACVZ</name>
<reference key="1">
    <citation type="journal article" date="2007" name="Nat. Biotechnol.">
        <title>Comparative analysis of the complete genome sequence of the plant growth-promoting bacterium Bacillus amyloliquefaciens FZB42.</title>
        <authorList>
            <person name="Chen X.H."/>
            <person name="Koumoutsi A."/>
            <person name="Scholz R."/>
            <person name="Eisenreich A."/>
            <person name="Schneider K."/>
            <person name="Heinemeyer I."/>
            <person name="Morgenstern B."/>
            <person name="Voss B."/>
            <person name="Hess W.R."/>
            <person name="Reva O."/>
            <person name="Junge H."/>
            <person name="Voigt B."/>
            <person name="Jungblut P.R."/>
            <person name="Vater J."/>
            <person name="Suessmuth R."/>
            <person name="Liesegang H."/>
            <person name="Strittmatter A."/>
            <person name="Gottschalk G."/>
            <person name="Borriss R."/>
        </authorList>
    </citation>
    <scope>NUCLEOTIDE SEQUENCE [LARGE SCALE GENOMIC DNA]</scope>
    <source>
        <strain>DSM 23117 / BGSC 10A6 / LMG 26770 / FZB42</strain>
    </source>
</reference>
<accession>A7Z2G8</accession>